<name>EIF3I_EREGS</name>
<reference key="1">
    <citation type="journal article" date="2004" name="Science">
        <title>The Ashbya gossypii genome as a tool for mapping the ancient Saccharomyces cerevisiae genome.</title>
        <authorList>
            <person name="Dietrich F.S."/>
            <person name="Voegeli S."/>
            <person name="Brachat S."/>
            <person name="Lerch A."/>
            <person name="Gates K."/>
            <person name="Steiner S."/>
            <person name="Mohr C."/>
            <person name="Poehlmann R."/>
            <person name="Luedi P."/>
            <person name="Choi S."/>
            <person name="Wing R.A."/>
            <person name="Flavier A."/>
            <person name="Gaffney T.D."/>
            <person name="Philippsen P."/>
        </authorList>
    </citation>
    <scope>NUCLEOTIDE SEQUENCE [LARGE SCALE GENOMIC DNA]</scope>
    <source>
        <strain>ATCC 10895 / CBS 109.51 / FGSC 9923 / NRRL Y-1056</strain>
    </source>
</reference>
<reference key="2">
    <citation type="journal article" date="2013" name="G3 (Bethesda)">
        <title>Genomes of Ashbya fungi isolated from insects reveal four mating-type loci, numerous translocations, lack of transposons, and distinct gene duplications.</title>
        <authorList>
            <person name="Dietrich F.S."/>
            <person name="Voegeli S."/>
            <person name="Kuo S."/>
            <person name="Philippsen P."/>
        </authorList>
    </citation>
    <scope>GENOME REANNOTATION</scope>
    <source>
        <strain>ATCC 10895 / CBS 109.51 / FGSC 9923 / NRRL Y-1056</strain>
    </source>
</reference>
<comment type="function">
    <text evidence="1">Component of the eukaryotic translation initiation factor 3 (eIF-3) complex, which is involved in protein synthesis of a specialized repertoire of mRNAs and, together with other initiation factors, stimulates binding of mRNA and methionyl-tRNAi to the 40S ribosome. The eIF-3 complex specifically targets and initiates translation of a subset of mRNAs involved in cell proliferation.</text>
</comment>
<comment type="subunit">
    <text evidence="1">Component of the eukaryotic translation initiation factor 3 (eIF-3) complex.</text>
</comment>
<comment type="subcellular location">
    <subcellularLocation>
        <location evidence="1">Cytoplasm</location>
    </subcellularLocation>
</comment>
<comment type="similarity">
    <text evidence="1">Belongs to the eIF-3 subunit I family.</text>
</comment>
<organism>
    <name type="scientific">Eremothecium gossypii (strain ATCC 10895 / CBS 109.51 / FGSC 9923 / NRRL Y-1056)</name>
    <name type="common">Yeast</name>
    <name type="synonym">Ashbya gossypii</name>
    <dbReference type="NCBI Taxonomy" id="284811"/>
    <lineage>
        <taxon>Eukaryota</taxon>
        <taxon>Fungi</taxon>
        <taxon>Dikarya</taxon>
        <taxon>Ascomycota</taxon>
        <taxon>Saccharomycotina</taxon>
        <taxon>Saccharomycetes</taxon>
        <taxon>Saccharomycetales</taxon>
        <taxon>Saccharomycetaceae</taxon>
        <taxon>Eremothecium</taxon>
    </lineage>
</organism>
<evidence type="ECO:0000255" key="1">
    <source>
        <dbReference type="HAMAP-Rule" id="MF_03008"/>
    </source>
</evidence>
<sequence length="346" mass="38601">MRPIMLMGHERSLTQVKYNREGDLIFTSGKDNVASVWYAMNGERLGTLEGHNGSIWSIDVDQHTEYAVTGSADFSVKVWRVRDGSIAHSWDTRTPVRRVEFSPTGDRVLAVLDNVMNYAGAIVVFSVTRDANNQITGFNSGLSCEILTQEGCAPVLVASWSYDGKYIVAGHQDGKISKYNGVTGECLEIKDLHKQRVSDIQFSLDRTYFLTTSRDSYANLVDVETFEVLKTYETDCPLNSGCITPLKEFVILGGGQDARDVTTTSAREGKFEAKFYHKLFQVEIGRVDDHFGPVNYIAVSPQGTSYASGGEDGFVRLHHFDKSYFDFKFDVEKSADAQKKVDTADR</sequence>
<protein>
    <recommendedName>
        <fullName evidence="1">Eukaryotic translation initiation factor 3 subunit I</fullName>
        <shortName evidence="1">eIF3i</shortName>
    </recommendedName>
    <alternativeName>
        <fullName evidence="1">Eukaryotic translation initiation factor 3 39 kDa subunit homolog</fullName>
        <shortName evidence="1">eIF-3 39 kDa subunit homolog</shortName>
    </alternativeName>
</protein>
<accession>Q759L2</accession>
<dbReference type="EMBL" id="AE016817">
    <property type="protein sequence ID" value="AAS52184.1"/>
    <property type="molecule type" value="Genomic_DNA"/>
</dbReference>
<dbReference type="RefSeq" id="NP_984360.1">
    <property type="nucleotide sequence ID" value="NM_209713.1"/>
</dbReference>
<dbReference type="SMR" id="Q759L2"/>
<dbReference type="FunCoup" id="Q759L2">
    <property type="interactions" value="1172"/>
</dbReference>
<dbReference type="STRING" id="284811.Q759L2"/>
<dbReference type="EnsemblFungi" id="AAS52184">
    <property type="protein sequence ID" value="AAS52184"/>
    <property type="gene ID" value="AGOS_ADR264C"/>
</dbReference>
<dbReference type="GeneID" id="4620522"/>
<dbReference type="KEGG" id="ago:AGOS_ADR264C"/>
<dbReference type="eggNOG" id="KOG0643">
    <property type="taxonomic scope" value="Eukaryota"/>
</dbReference>
<dbReference type="HOGENOM" id="CLU_043845_0_1_1"/>
<dbReference type="InParanoid" id="Q759L2"/>
<dbReference type="OMA" id="VWFSHNG"/>
<dbReference type="OrthoDB" id="24966at2759"/>
<dbReference type="Proteomes" id="UP000000591">
    <property type="component" value="Chromosome IV"/>
</dbReference>
<dbReference type="GO" id="GO:0016282">
    <property type="term" value="C:eukaryotic 43S preinitiation complex"/>
    <property type="evidence" value="ECO:0007669"/>
    <property type="project" value="UniProtKB-UniRule"/>
</dbReference>
<dbReference type="GO" id="GO:0033290">
    <property type="term" value="C:eukaryotic 48S preinitiation complex"/>
    <property type="evidence" value="ECO:0007669"/>
    <property type="project" value="UniProtKB-UniRule"/>
</dbReference>
<dbReference type="GO" id="GO:0071540">
    <property type="term" value="C:eukaryotic translation initiation factor 3 complex, eIF3e"/>
    <property type="evidence" value="ECO:0007669"/>
    <property type="project" value="EnsemblFungi"/>
</dbReference>
<dbReference type="GO" id="GO:0071541">
    <property type="term" value="C:eukaryotic translation initiation factor 3 complex, eIF3m"/>
    <property type="evidence" value="ECO:0000318"/>
    <property type="project" value="GO_Central"/>
</dbReference>
<dbReference type="GO" id="GO:0034399">
    <property type="term" value="C:nuclear periphery"/>
    <property type="evidence" value="ECO:0007669"/>
    <property type="project" value="EnsemblFungi"/>
</dbReference>
<dbReference type="GO" id="GO:0003723">
    <property type="term" value="F:RNA binding"/>
    <property type="evidence" value="ECO:0000318"/>
    <property type="project" value="GO_Central"/>
</dbReference>
<dbReference type="GO" id="GO:0003743">
    <property type="term" value="F:translation initiation factor activity"/>
    <property type="evidence" value="ECO:0000318"/>
    <property type="project" value="GO_Central"/>
</dbReference>
<dbReference type="GO" id="GO:0002183">
    <property type="term" value="P:cytoplasmic translational initiation"/>
    <property type="evidence" value="ECO:0000318"/>
    <property type="project" value="GO_Central"/>
</dbReference>
<dbReference type="GO" id="GO:0001732">
    <property type="term" value="P:formation of cytoplasmic translation initiation complex"/>
    <property type="evidence" value="ECO:0007669"/>
    <property type="project" value="UniProtKB-UniRule"/>
</dbReference>
<dbReference type="FunFam" id="2.130.10.10:FF:000127">
    <property type="entry name" value="Eukaryotic translation initiation factor 3 subunit I"/>
    <property type="match status" value="1"/>
</dbReference>
<dbReference type="Gene3D" id="2.130.10.10">
    <property type="entry name" value="YVTN repeat-like/Quinoprotein amine dehydrogenase"/>
    <property type="match status" value="1"/>
</dbReference>
<dbReference type="HAMAP" id="MF_03008">
    <property type="entry name" value="eIF3i"/>
    <property type="match status" value="1"/>
</dbReference>
<dbReference type="InterPro" id="IPR027525">
    <property type="entry name" value="eIF3i"/>
</dbReference>
<dbReference type="InterPro" id="IPR015943">
    <property type="entry name" value="WD40/YVTN_repeat-like_dom_sf"/>
</dbReference>
<dbReference type="InterPro" id="IPR036322">
    <property type="entry name" value="WD40_repeat_dom_sf"/>
</dbReference>
<dbReference type="InterPro" id="IPR001680">
    <property type="entry name" value="WD40_rpt"/>
</dbReference>
<dbReference type="PANTHER" id="PTHR19877">
    <property type="entry name" value="EUKARYOTIC TRANSLATION INITIATION FACTOR 3 SUBUNIT I"/>
    <property type="match status" value="1"/>
</dbReference>
<dbReference type="PANTHER" id="PTHR19877:SF1">
    <property type="entry name" value="EUKARYOTIC TRANSLATION INITIATION FACTOR 3 SUBUNIT I"/>
    <property type="match status" value="1"/>
</dbReference>
<dbReference type="Pfam" id="PF24805">
    <property type="entry name" value="EIF3I"/>
    <property type="match status" value="1"/>
</dbReference>
<dbReference type="SMART" id="SM00320">
    <property type="entry name" value="WD40"/>
    <property type="match status" value="5"/>
</dbReference>
<dbReference type="SUPFAM" id="SSF50978">
    <property type="entry name" value="WD40 repeat-like"/>
    <property type="match status" value="1"/>
</dbReference>
<dbReference type="PROSITE" id="PS50082">
    <property type="entry name" value="WD_REPEATS_2"/>
    <property type="match status" value="2"/>
</dbReference>
<dbReference type="PROSITE" id="PS50294">
    <property type="entry name" value="WD_REPEATS_REGION"/>
    <property type="match status" value="2"/>
</dbReference>
<proteinExistence type="inferred from homology"/>
<gene>
    <name evidence="1" type="primary">TIF34</name>
    <name type="ordered locus">ADR264C</name>
</gene>
<keyword id="KW-0963">Cytoplasm</keyword>
<keyword id="KW-0396">Initiation factor</keyword>
<keyword id="KW-0648">Protein biosynthesis</keyword>
<keyword id="KW-1185">Reference proteome</keyword>
<keyword id="KW-0677">Repeat</keyword>
<keyword id="KW-0853">WD repeat</keyword>
<feature type="chain" id="PRO_0000365354" description="Eukaryotic translation initiation factor 3 subunit I">
    <location>
        <begin position="1"/>
        <end position="346"/>
    </location>
</feature>
<feature type="repeat" description="WD 1">
    <location>
        <begin position="8"/>
        <end position="47"/>
    </location>
</feature>
<feature type="repeat" description="WD 2">
    <location>
        <begin position="50"/>
        <end position="89"/>
    </location>
</feature>
<feature type="repeat" description="WD 3">
    <location>
        <begin position="150"/>
        <end position="189"/>
    </location>
</feature>
<feature type="repeat" description="WD 4">
    <location>
        <begin position="192"/>
        <end position="233"/>
    </location>
</feature>
<feature type="repeat" description="WD 5">
    <location>
        <begin position="289"/>
        <end position="328"/>
    </location>
</feature>